<sequence>MSQEIAVIGSPAFTTGFQLAGVRKVENVADDEKDDDLDAAVEAVLADEDVGIAVMHDDDLAHLSRGVRQSVEASVEPTFVTIGGGASGASGLRDQIKRAIGIDLMDDDDDASAADTEAGD</sequence>
<organism>
    <name type="scientific">Halobacterium salinarum (strain ATCC 700922 / JCM 11081 / NRC-1)</name>
    <name type="common">Halobacterium halobium</name>
    <dbReference type="NCBI Taxonomy" id="64091"/>
    <lineage>
        <taxon>Archaea</taxon>
        <taxon>Methanobacteriati</taxon>
        <taxon>Methanobacteriota</taxon>
        <taxon>Stenosarchaea group</taxon>
        <taxon>Halobacteria</taxon>
        <taxon>Halobacteriales</taxon>
        <taxon>Halobacteriaceae</taxon>
        <taxon>Halobacterium</taxon>
        <taxon>Halobacterium salinarum NRC-34001</taxon>
    </lineage>
</organism>
<dbReference type="EMBL" id="AE004437">
    <property type="protein sequence ID" value="AAG20278.1"/>
    <property type="molecule type" value="Genomic_DNA"/>
</dbReference>
<dbReference type="PIR" id="B84364">
    <property type="entry name" value="B84364"/>
</dbReference>
<dbReference type="RefSeq" id="WP_010903580.1">
    <property type="nucleotide sequence ID" value="NC_002607.1"/>
</dbReference>
<dbReference type="SMR" id="Q9HNE2"/>
<dbReference type="STRING" id="64091.VNG_2140G"/>
<dbReference type="PaxDb" id="64091-VNG_2140G"/>
<dbReference type="KEGG" id="hal:VNG_2140G"/>
<dbReference type="PATRIC" id="fig|64091.14.peg.1638"/>
<dbReference type="HOGENOM" id="CLU_135754_2_2_2"/>
<dbReference type="InParanoid" id="Q9HNE2"/>
<dbReference type="OrthoDB" id="24971at2157"/>
<dbReference type="Proteomes" id="UP000000554">
    <property type="component" value="Chromosome"/>
</dbReference>
<dbReference type="GO" id="GO:0005886">
    <property type="term" value="C:plasma membrane"/>
    <property type="evidence" value="ECO:0007669"/>
    <property type="project" value="UniProtKB-SubCell"/>
</dbReference>
<dbReference type="GO" id="GO:0005524">
    <property type="term" value="F:ATP binding"/>
    <property type="evidence" value="ECO:0007669"/>
    <property type="project" value="UniProtKB-UniRule"/>
</dbReference>
<dbReference type="GO" id="GO:0046933">
    <property type="term" value="F:proton-transporting ATP synthase activity, rotational mechanism"/>
    <property type="evidence" value="ECO:0007669"/>
    <property type="project" value="UniProtKB-UniRule"/>
</dbReference>
<dbReference type="GO" id="GO:0046961">
    <property type="term" value="F:proton-transporting ATPase activity, rotational mechanism"/>
    <property type="evidence" value="ECO:0007669"/>
    <property type="project" value="InterPro"/>
</dbReference>
<dbReference type="GO" id="GO:0042777">
    <property type="term" value="P:proton motive force-driven plasma membrane ATP synthesis"/>
    <property type="evidence" value="ECO:0007669"/>
    <property type="project" value="UniProtKB-UniRule"/>
</dbReference>
<dbReference type="Gene3D" id="3.40.50.10580">
    <property type="entry name" value="ATPase, V1 complex, subunit F"/>
    <property type="match status" value="1"/>
</dbReference>
<dbReference type="HAMAP" id="MF_00312">
    <property type="entry name" value="ATP_synth_F_arch"/>
    <property type="match status" value="1"/>
</dbReference>
<dbReference type="InterPro" id="IPR008218">
    <property type="entry name" value="ATPase_V1-cplx_f_g_su"/>
</dbReference>
<dbReference type="InterPro" id="IPR022944">
    <property type="entry name" value="ATPase_V1-cplx_fsu_bac/arc"/>
</dbReference>
<dbReference type="InterPro" id="IPR036906">
    <property type="entry name" value="ATPase_V1_fsu_sf"/>
</dbReference>
<dbReference type="NCBIfam" id="NF002577">
    <property type="entry name" value="PRK02228.1"/>
    <property type="match status" value="1"/>
</dbReference>
<dbReference type="Pfam" id="PF01990">
    <property type="entry name" value="ATP-synt_F"/>
    <property type="match status" value="1"/>
</dbReference>
<dbReference type="SUPFAM" id="SSF159468">
    <property type="entry name" value="AtpF-like"/>
    <property type="match status" value="1"/>
</dbReference>
<feature type="chain" id="PRO_0000144815" description="A-type ATP synthase subunit F">
    <location>
        <begin position="1"/>
        <end position="120"/>
    </location>
</feature>
<evidence type="ECO:0000255" key="1">
    <source>
        <dbReference type="HAMAP-Rule" id="MF_00312"/>
    </source>
</evidence>
<comment type="function">
    <text evidence="1">Component of the A-type ATP synthase that produces ATP from ADP in the presence of a proton gradient across the membrane.</text>
</comment>
<comment type="subunit">
    <text evidence="1">Has multiple subunits with at least A(3), B(3), C, D, E, F, H, I and proteolipid K(x).</text>
</comment>
<comment type="subcellular location">
    <subcellularLocation>
        <location evidence="1">Cell membrane</location>
        <topology evidence="1">Peripheral membrane protein</topology>
    </subcellularLocation>
</comment>
<comment type="similarity">
    <text evidence="1">Belongs to the V-ATPase F subunit family.</text>
</comment>
<accession>Q9HNE2</accession>
<keyword id="KW-0066">ATP synthesis</keyword>
<keyword id="KW-1003">Cell membrane</keyword>
<keyword id="KW-0375">Hydrogen ion transport</keyword>
<keyword id="KW-0406">Ion transport</keyword>
<keyword id="KW-0472">Membrane</keyword>
<keyword id="KW-1185">Reference proteome</keyword>
<keyword id="KW-0813">Transport</keyword>
<reference key="1">
    <citation type="journal article" date="2000" name="Proc. Natl. Acad. Sci. U.S.A.">
        <title>Genome sequence of Halobacterium species NRC-1.</title>
        <authorList>
            <person name="Ng W.V."/>
            <person name="Kennedy S.P."/>
            <person name="Mahairas G.G."/>
            <person name="Berquist B."/>
            <person name="Pan M."/>
            <person name="Shukla H.D."/>
            <person name="Lasky S.R."/>
            <person name="Baliga N.S."/>
            <person name="Thorsson V."/>
            <person name="Sbrogna J."/>
            <person name="Swartzell S."/>
            <person name="Weir D."/>
            <person name="Hall J."/>
            <person name="Dahl T.A."/>
            <person name="Welti R."/>
            <person name="Goo Y.A."/>
            <person name="Leithauser B."/>
            <person name="Keller K."/>
            <person name="Cruz R."/>
            <person name="Danson M.J."/>
            <person name="Hough D.W."/>
            <person name="Maddocks D.G."/>
            <person name="Jablonski P.E."/>
            <person name="Krebs M.P."/>
            <person name="Angevine C.M."/>
            <person name="Dale H."/>
            <person name="Isenbarger T.A."/>
            <person name="Peck R.F."/>
            <person name="Pohlschroder M."/>
            <person name="Spudich J.L."/>
            <person name="Jung K.-H."/>
            <person name="Alam M."/>
            <person name="Freitas T."/>
            <person name="Hou S."/>
            <person name="Daniels C.J."/>
            <person name="Dennis P.P."/>
            <person name="Omer A.D."/>
            <person name="Ebhardt H."/>
            <person name="Lowe T.M."/>
            <person name="Liang P."/>
            <person name="Riley M."/>
            <person name="Hood L."/>
            <person name="DasSarma S."/>
        </authorList>
    </citation>
    <scope>NUCLEOTIDE SEQUENCE [LARGE SCALE GENOMIC DNA]</scope>
    <source>
        <strain>ATCC 700922 / JCM 11081 / NRC-1</strain>
    </source>
</reference>
<name>AATF_HALSA</name>
<proteinExistence type="inferred from homology"/>
<protein>
    <recommendedName>
        <fullName evidence="1">A-type ATP synthase subunit F</fullName>
    </recommendedName>
</protein>
<gene>
    <name evidence="1" type="primary">atpF</name>
    <name type="ordered locus">VNG_2140G</name>
</gene>